<gene>
    <name type="primary">PAP21</name>
    <name type="synonym">AT5</name>
    <name type="ordered locus">At3g52810</name>
    <name type="ORF">F3C22.210</name>
</gene>
<proteinExistence type="evidence at transcript level"/>
<name>PPA21_ARATH</name>
<dbReference type="EC" id="3.1.3.2"/>
<dbReference type="EMBL" id="AF492667">
    <property type="protein sequence ID" value="AAM15916.1"/>
    <property type="molecule type" value="mRNA"/>
</dbReference>
<dbReference type="EMBL" id="AL353912">
    <property type="protein sequence ID" value="CAB89242.1"/>
    <property type="molecule type" value="Genomic_DNA"/>
</dbReference>
<dbReference type="EMBL" id="CP002686">
    <property type="protein sequence ID" value="AEE78996.1"/>
    <property type="molecule type" value="Genomic_DNA"/>
</dbReference>
<dbReference type="PIR" id="T49034">
    <property type="entry name" value="T49034"/>
</dbReference>
<dbReference type="RefSeq" id="NP_190849.1">
    <property type="nucleotide sequence ID" value="NM_115141.3"/>
</dbReference>
<dbReference type="SMR" id="Q9LXI4"/>
<dbReference type="FunCoup" id="Q9LXI4">
    <property type="interactions" value="114"/>
</dbReference>
<dbReference type="STRING" id="3702.Q9LXI4"/>
<dbReference type="GlyCosmos" id="Q9LXI4">
    <property type="glycosylation" value="1 site, No reported glycans"/>
</dbReference>
<dbReference type="GlyGen" id="Q9LXI4">
    <property type="glycosylation" value="1 site"/>
</dbReference>
<dbReference type="PaxDb" id="3702-AT3G52810.1"/>
<dbReference type="ProteomicsDB" id="249022"/>
<dbReference type="EnsemblPlants" id="AT3G52810.1">
    <property type="protein sequence ID" value="AT3G52810.1"/>
    <property type="gene ID" value="AT3G52810"/>
</dbReference>
<dbReference type="GeneID" id="824447"/>
<dbReference type="Gramene" id="AT3G52810.1">
    <property type="protein sequence ID" value="AT3G52810.1"/>
    <property type="gene ID" value="AT3G52810"/>
</dbReference>
<dbReference type="KEGG" id="ath:AT3G52810"/>
<dbReference type="Araport" id="AT3G52810"/>
<dbReference type="TAIR" id="AT3G52810">
    <property type="gene designation" value="PAP21"/>
</dbReference>
<dbReference type="eggNOG" id="KOG1378">
    <property type="taxonomic scope" value="Eukaryota"/>
</dbReference>
<dbReference type="HOGENOM" id="CLU_013387_0_0_1"/>
<dbReference type="InParanoid" id="Q9LXI4"/>
<dbReference type="OMA" id="RIYNATH"/>
<dbReference type="OrthoDB" id="45007at2759"/>
<dbReference type="PhylomeDB" id="Q9LXI4"/>
<dbReference type="BioCyc" id="ARA:AT3G52810-MONOMER"/>
<dbReference type="PRO" id="PR:Q9LXI4"/>
<dbReference type="Proteomes" id="UP000006548">
    <property type="component" value="Chromosome 3"/>
</dbReference>
<dbReference type="ExpressionAtlas" id="Q9LXI4">
    <property type="expression patterns" value="baseline and differential"/>
</dbReference>
<dbReference type="GO" id="GO:0005576">
    <property type="term" value="C:extracellular region"/>
    <property type="evidence" value="ECO:0007669"/>
    <property type="project" value="UniProtKB-SubCell"/>
</dbReference>
<dbReference type="GO" id="GO:0003993">
    <property type="term" value="F:acid phosphatase activity"/>
    <property type="evidence" value="ECO:0000250"/>
    <property type="project" value="TAIR"/>
</dbReference>
<dbReference type="GO" id="GO:0046872">
    <property type="term" value="F:metal ion binding"/>
    <property type="evidence" value="ECO:0007669"/>
    <property type="project" value="UniProtKB-KW"/>
</dbReference>
<dbReference type="CDD" id="cd00839">
    <property type="entry name" value="MPP_PAPs"/>
    <property type="match status" value="1"/>
</dbReference>
<dbReference type="FunFam" id="2.60.40.380:FF:000001">
    <property type="entry name" value="Fe(3+)-Zn(2+) purple acid phosphatase"/>
    <property type="match status" value="1"/>
</dbReference>
<dbReference type="Gene3D" id="3.60.21.10">
    <property type="match status" value="1"/>
</dbReference>
<dbReference type="Gene3D" id="2.60.40.380">
    <property type="entry name" value="Purple acid phosphatase-like, N-terminal"/>
    <property type="match status" value="1"/>
</dbReference>
<dbReference type="InterPro" id="IPR004843">
    <property type="entry name" value="Calcineurin-like_PHP_ApaH"/>
</dbReference>
<dbReference type="InterPro" id="IPR029052">
    <property type="entry name" value="Metallo-depent_PP-like"/>
</dbReference>
<dbReference type="InterPro" id="IPR041792">
    <property type="entry name" value="MPP_PAP"/>
</dbReference>
<dbReference type="InterPro" id="IPR039331">
    <property type="entry name" value="PPA-like"/>
</dbReference>
<dbReference type="InterPro" id="IPR008963">
    <property type="entry name" value="Purple_acid_Pase-like_N"/>
</dbReference>
<dbReference type="InterPro" id="IPR015914">
    <property type="entry name" value="Purple_acid_Pase_N"/>
</dbReference>
<dbReference type="InterPro" id="IPR025733">
    <property type="entry name" value="Purple_acid_PPase_C_dom"/>
</dbReference>
<dbReference type="PANTHER" id="PTHR22953">
    <property type="entry name" value="ACID PHOSPHATASE RELATED"/>
    <property type="match status" value="1"/>
</dbReference>
<dbReference type="PANTHER" id="PTHR22953:SF105">
    <property type="entry name" value="PURPLE ACID PHOSPHATASE 21"/>
    <property type="match status" value="1"/>
</dbReference>
<dbReference type="Pfam" id="PF00149">
    <property type="entry name" value="Metallophos"/>
    <property type="match status" value="1"/>
</dbReference>
<dbReference type="Pfam" id="PF14008">
    <property type="entry name" value="Metallophos_C"/>
    <property type="match status" value="1"/>
</dbReference>
<dbReference type="Pfam" id="PF16656">
    <property type="entry name" value="Pur_ac_phosph_N"/>
    <property type="match status" value="1"/>
</dbReference>
<dbReference type="SUPFAM" id="SSF56300">
    <property type="entry name" value="Metallo-dependent phosphatases"/>
    <property type="match status" value="1"/>
</dbReference>
<dbReference type="SUPFAM" id="SSF49363">
    <property type="entry name" value="Purple acid phosphatase, N-terminal domain"/>
    <property type="match status" value="1"/>
</dbReference>
<protein>
    <recommendedName>
        <fullName>Purple acid phosphatase 21</fullName>
        <ecNumber>3.1.3.2</ecNumber>
    </recommendedName>
</protein>
<keyword id="KW-0325">Glycoprotein</keyword>
<keyword id="KW-0378">Hydrolase</keyword>
<keyword id="KW-0408">Iron</keyword>
<keyword id="KW-0479">Metal-binding</keyword>
<keyword id="KW-1185">Reference proteome</keyword>
<keyword id="KW-0964">Secreted</keyword>
<keyword id="KW-0732">Signal</keyword>
<keyword id="KW-0862">Zinc</keyword>
<accession>Q9LXI4</accession>
<comment type="catalytic activity">
    <reaction>
        <text>a phosphate monoester + H2O = an alcohol + phosphate</text>
        <dbReference type="Rhea" id="RHEA:15017"/>
        <dbReference type="ChEBI" id="CHEBI:15377"/>
        <dbReference type="ChEBI" id="CHEBI:30879"/>
        <dbReference type="ChEBI" id="CHEBI:43474"/>
        <dbReference type="ChEBI" id="CHEBI:67140"/>
        <dbReference type="EC" id="3.1.3.2"/>
    </reaction>
</comment>
<comment type="cofactor">
    <cofactor evidence="1">
        <name>Fe cation</name>
        <dbReference type="ChEBI" id="CHEBI:24875"/>
    </cofactor>
    <text evidence="1">Binds 1 Fe cation per subunit.</text>
</comment>
<comment type="cofactor">
    <cofactor evidence="1">
        <name>Zn(2+)</name>
        <dbReference type="ChEBI" id="CHEBI:29105"/>
    </cofactor>
    <text evidence="1">Binds 1 zinc ion per subunit.</text>
</comment>
<comment type="subunit">
    <text evidence="1">Homodimer.</text>
</comment>
<comment type="subcellular location">
    <subcellularLocation>
        <location evidence="1">Secreted</location>
    </subcellularLocation>
</comment>
<comment type="tissue specificity">
    <text evidence="3">Expressed flowers and siliques.</text>
</comment>
<comment type="similarity">
    <text evidence="4">Belongs to the metallophosphoesterase superfamily. Purple acid phosphatase family.</text>
</comment>
<sequence length="437" mass="50641">MKKMKIFGFLISFSLFFLSPFVCQANYDSNFTRPPPRPLFIVSHGRPKFYPQQVHISLAGKDHMRVTYTTDDLNVASMVEYGKHPKKYDKKTAGESTSYTYFFYNSGKIHHVKIGPLKPNTKYYYRCGGHGDEFSFKTPPSKFPIEFAVAGDLGQTDWTVRTLDQIRKRDFDVFLLPGDLSYADTHQPLWDSFGRLLETLASTRPWMVTEGNHEIESFPTNDHISFKSYNARWLMPHAESLSHSNLYYSFDVAGVHTVMLGSYTPYESHSDQYHWLQADLRKVDRKKTPWLVVVMHTPWYSTNKAHYGEGEKMRSALESLLYRAQVDVVFAGHVHTYERFKPIYNKKADPCGPMYITIGDGGNREGLALRFKKPQSPLSEFRESSFGHGRLRIIDHKRAHWSWHRNNDEMSSIADEVSFESPRTSSHCHSNRYRGEI</sequence>
<evidence type="ECO:0000250" key="1"/>
<evidence type="ECO:0000255" key="2"/>
<evidence type="ECO:0000269" key="3">
    <source>
    </source>
</evidence>
<evidence type="ECO:0000305" key="4"/>
<organism>
    <name type="scientific">Arabidopsis thaliana</name>
    <name type="common">Mouse-ear cress</name>
    <dbReference type="NCBI Taxonomy" id="3702"/>
    <lineage>
        <taxon>Eukaryota</taxon>
        <taxon>Viridiplantae</taxon>
        <taxon>Streptophyta</taxon>
        <taxon>Embryophyta</taxon>
        <taxon>Tracheophyta</taxon>
        <taxon>Spermatophyta</taxon>
        <taxon>Magnoliopsida</taxon>
        <taxon>eudicotyledons</taxon>
        <taxon>Gunneridae</taxon>
        <taxon>Pentapetalae</taxon>
        <taxon>rosids</taxon>
        <taxon>malvids</taxon>
        <taxon>Brassicales</taxon>
        <taxon>Brassicaceae</taxon>
        <taxon>Camelineae</taxon>
        <taxon>Arabidopsis</taxon>
    </lineage>
</organism>
<feature type="signal peptide" evidence="2">
    <location>
        <begin position="1"/>
        <end position="25"/>
    </location>
</feature>
<feature type="chain" id="PRO_0000372824" description="Purple acid phosphatase 21">
    <location>
        <begin position="26"/>
        <end position="437"/>
    </location>
</feature>
<feature type="active site" description="Proton donor" evidence="1">
    <location>
        <position position="306"/>
    </location>
</feature>
<feature type="binding site" evidence="1">
    <location>
        <position position="152"/>
    </location>
    <ligand>
        <name>Fe cation</name>
        <dbReference type="ChEBI" id="CHEBI:24875"/>
    </ligand>
</feature>
<feature type="binding site" evidence="1">
    <location>
        <position position="179"/>
    </location>
    <ligand>
        <name>Fe cation</name>
        <dbReference type="ChEBI" id="CHEBI:24875"/>
    </ligand>
</feature>
<feature type="binding site" evidence="1">
    <location>
        <position position="179"/>
    </location>
    <ligand>
        <name>Zn(2+)</name>
        <dbReference type="ChEBI" id="CHEBI:29105"/>
    </ligand>
</feature>
<feature type="binding site" evidence="1">
    <location>
        <position position="182"/>
    </location>
    <ligand>
        <name>Fe cation</name>
        <dbReference type="ChEBI" id="CHEBI:24875"/>
    </ligand>
</feature>
<feature type="binding site" evidence="1">
    <location>
        <position position="212"/>
    </location>
    <ligand>
        <name>substrate</name>
    </ligand>
</feature>
<feature type="binding site" evidence="1">
    <location>
        <position position="212"/>
    </location>
    <ligand>
        <name>Zn(2+)</name>
        <dbReference type="ChEBI" id="CHEBI:29105"/>
    </ligand>
</feature>
<feature type="binding site" evidence="1">
    <location>
        <position position="296"/>
    </location>
    <ligand>
        <name>Zn(2+)</name>
        <dbReference type="ChEBI" id="CHEBI:29105"/>
    </ligand>
</feature>
<feature type="binding site" evidence="1">
    <location>
        <begin position="333"/>
        <end position="335"/>
    </location>
    <ligand>
        <name>substrate</name>
    </ligand>
</feature>
<feature type="binding site" evidence="1">
    <location>
        <position position="333"/>
    </location>
    <ligand>
        <name>Zn(2+)</name>
        <dbReference type="ChEBI" id="CHEBI:29105"/>
    </ligand>
</feature>
<feature type="binding site" evidence="1">
    <location>
        <position position="335"/>
    </location>
    <ligand>
        <name>Fe cation</name>
        <dbReference type="ChEBI" id="CHEBI:24875"/>
    </ligand>
</feature>
<feature type="glycosylation site" description="N-linked (GlcNAc...) asparagine" evidence="2">
    <location>
        <position position="30"/>
    </location>
</feature>
<reference key="1">
    <citation type="journal article" date="2002" name="J. Biol. Chem.">
        <title>Purple acid phosphatases of Arabidopsis thaliana. Comparative analysis and differential regulation by phosphate deprivation.</title>
        <authorList>
            <person name="Li D."/>
            <person name="Zhu H."/>
            <person name="Liu K."/>
            <person name="Liu X."/>
            <person name="Leggewie G."/>
            <person name="Udvardi M."/>
            <person name="Wang D."/>
        </authorList>
    </citation>
    <scope>NUCLEOTIDE SEQUENCE [MRNA]</scope>
    <scope>GENE FAMILY</scope>
    <scope>NOMENCLATURE</scope>
    <source>
        <strain>cv. Col-1</strain>
    </source>
</reference>
<reference key="2">
    <citation type="journal article" date="2000" name="Nature">
        <title>Sequence and analysis of chromosome 3 of the plant Arabidopsis thaliana.</title>
        <authorList>
            <person name="Salanoubat M."/>
            <person name="Lemcke K."/>
            <person name="Rieger M."/>
            <person name="Ansorge W."/>
            <person name="Unseld M."/>
            <person name="Fartmann B."/>
            <person name="Valle G."/>
            <person name="Bloecker H."/>
            <person name="Perez-Alonso M."/>
            <person name="Obermaier B."/>
            <person name="Delseny M."/>
            <person name="Boutry M."/>
            <person name="Grivell L.A."/>
            <person name="Mache R."/>
            <person name="Puigdomenech P."/>
            <person name="De Simone V."/>
            <person name="Choisne N."/>
            <person name="Artiguenave F."/>
            <person name="Robert C."/>
            <person name="Brottier P."/>
            <person name="Wincker P."/>
            <person name="Cattolico L."/>
            <person name="Weissenbach J."/>
            <person name="Saurin W."/>
            <person name="Quetier F."/>
            <person name="Schaefer M."/>
            <person name="Mueller-Auer S."/>
            <person name="Gabel C."/>
            <person name="Fuchs M."/>
            <person name="Benes V."/>
            <person name="Wurmbach E."/>
            <person name="Drzonek H."/>
            <person name="Erfle H."/>
            <person name="Jordan N."/>
            <person name="Bangert S."/>
            <person name="Wiedelmann R."/>
            <person name="Kranz H."/>
            <person name="Voss H."/>
            <person name="Holland R."/>
            <person name="Brandt P."/>
            <person name="Nyakatura G."/>
            <person name="Vezzi A."/>
            <person name="D'Angelo M."/>
            <person name="Pallavicini A."/>
            <person name="Toppo S."/>
            <person name="Simionati B."/>
            <person name="Conrad A."/>
            <person name="Hornischer K."/>
            <person name="Kauer G."/>
            <person name="Loehnert T.-H."/>
            <person name="Nordsiek G."/>
            <person name="Reichelt J."/>
            <person name="Scharfe M."/>
            <person name="Schoen O."/>
            <person name="Bargues M."/>
            <person name="Terol J."/>
            <person name="Climent J."/>
            <person name="Navarro P."/>
            <person name="Collado C."/>
            <person name="Perez-Perez A."/>
            <person name="Ottenwaelder B."/>
            <person name="Duchemin D."/>
            <person name="Cooke R."/>
            <person name="Laudie M."/>
            <person name="Berger-Llauro C."/>
            <person name="Purnelle B."/>
            <person name="Masuy D."/>
            <person name="de Haan M."/>
            <person name="Maarse A.C."/>
            <person name="Alcaraz J.-P."/>
            <person name="Cottet A."/>
            <person name="Casacuberta E."/>
            <person name="Monfort A."/>
            <person name="Argiriou A."/>
            <person name="Flores M."/>
            <person name="Liguori R."/>
            <person name="Vitale D."/>
            <person name="Mannhaupt G."/>
            <person name="Haase D."/>
            <person name="Schoof H."/>
            <person name="Rudd S."/>
            <person name="Zaccaria P."/>
            <person name="Mewes H.-W."/>
            <person name="Mayer K.F.X."/>
            <person name="Kaul S."/>
            <person name="Town C.D."/>
            <person name="Koo H.L."/>
            <person name="Tallon L.J."/>
            <person name="Jenkins J."/>
            <person name="Rooney T."/>
            <person name="Rizzo M."/>
            <person name="Walts A."/>
            <person name="Utterback T."/>
            <person name="Fujii C.Y."/>
            <person name="Shea T.P."/>
            <person name="Creasy T.H."/>
            <person name="Haas B."/>
            <person name="Maiti R."/>
            <person name="Wu D."/>
            <person name="Peterson J."/>
            <person name="Van Aken S."/>
            <person name="Pai G."/>
            <person name="Militscher J."/>
            <person name="Sellers P."/>
            <person name="Gill J.E."/>
            <person name="Feldblyum T.V."/>
            <person name="Preuss D."/>
            <person name="Lin X."/>
            <person name="Nierman W.C."/>
            <person name="Salzberg S.L."/>
            <person name="White O."/>
            <person name="Venter J.C."/>
            <person name="Fraser C.M."/>
            <person name="Kaneko T."/>
            <person name="Nakamura Y."/>
            <person name="Sato S."/>
            <person name="Kato T."/>
            <person name="Asamizu E."/>
            <person name="Sasamoto S."/>
            <person name="Kimura T."/>
            <person name="Idesawa K."/>
            <person name="Kawashima K."/>
            <person name="Kishida Y."/>
            <person name="Kiyokawa C."/>
            <person name="Kohara M."/>
            <person name="Matsumoto M."/>
            <person name="Matsuno A."/>
            <person name="Muraki A."/>
            <person name="Nakayama S."/>
            <person name="Nakazaki N."/>
            <person name="Shinpo S."/>
            <person name="Takeuchi C."/>
            <person name="Wada T."/>
            <person name="Watanabe A."/>
            <person name="Yamada M."/>
            <person name="Yasuda M."/>
            <person name="Tabata S."/>
        </authorList>
    </citation>
    <scope>NUCLEOTIDE SEQUENCE [LARGE SCALE GENOMIC DNA]</scope>
    <source>
        <strain>cv. Columbia</strain>
    </source>
</reference>
<reference key="3">
    <citation type="journal article" date="2017" name="Plant J.">
        <title>Araport11: a complete reannotation of the Arabidopsis thaliana reference genome.</title>
        <authorList>
            <person name="Cheng C.Y."/>
            <person name="Krishnakumar V."/>
            <person name="Chan A.P."/>
            <person name="Thibaud-Nissen F."/>
            <person name="Schobel S."/>
            <person name="Town C.D."/>
        </authorList>
    </citation>
    <scope>GENOME REANNOTATION</scope>
    <source>
        <strain>cv. Columbia</strain>
    </source>
</reference>
<reference key="4">
    <citation type="journal article" date="2005" name="Plant Mol. Biol.">
        <title>Expression patterns of purple acid phosphatase genes in Arabidopsis organs and functional analysis of AtPAP23 predominantly transcribed in flower.</title>
        <authorList>
            <person name="Zhu H."/>
            <person name="Qian W."/>
            <person name="Lu X."/>
            <person name="Li D."/>
            <person name="Liu X."/>
            <person name="Liu K."/>
            <person name="Wang D."/>
        </authorList>
    </citation>
    <scope>TISSUE SPECIFICITY</scope>
</reference>